<reference key="1">
    <citation type="journal article" date="2008" name="Proc. Natl. Acad. Sci. U.S.A.">
        <title>Nitrogen fixation island and rhizosphere competence traits in the genome of root-associated Pseudomonas stutzeri A1501.</title>
        <authorList>
            <person name="Yan Y."/>
            <person name="Yang J."/>
            <person name="Dou Y."/>
            <person name="Chen M."/>
            <person name="Ping S."/>
            <person name="Peng J."/>
            <person name="Lu W."/>
            <person name="Zhang W."/>
            <person name="Yao Z."/>
            <person name="Li H."/>
            <person name="Liu W."/>
            <person name="He S."/>
            <person name="Geng L."/>
            <person name="Zhang X."/>
            <person name="Yang F."/>
            <person name="Yu H."/>
            <person name="Zhan Y."/>
            <person name="Li D."/>
            <person name="Lin Z."/>
            <person name="Wang Y."/>
            <person name="Elmerich C."/>
            <person name="Lin M."/>
            <person name="Jin Q."/>
        </authorList>
    </citation>
    <scope>NUCLEOTIDE SEQUENCE [LARGE SCALE GENOMIC DNA]</scope>
    <source>
        <strain>A1501</strain>
    </source>
</reference>
<organism>
    <name type="scientific">Stutzerimonas stutzeri (strain A1501)</name>
    <name type="common">Pseudomonas stutzeri</name>
    <dbReference type="NCBI Taxonomy" id="379731"/>
    <lineage>
        <taxon>Bacteria</taxon>
        <taxon>Pseudomonadati</taxon>
        <taxon>Pseudomonadota</taxon>
        <taxon>Gammaproteobacteria</taxon>
        <taxon>Pseudomonadales</taxon>
        <taxon>Pseudomonadaceae</taxon>
        <taxon>Stutzerimonas</taxon>
    </lineage>
</organism>
<name>ADE_STUS1</name>
<accession>A4VQI5</accession>
<evidence type="ECO:0000255" key="1">
    <source>
        <dbReference type="HAMAP-Rule" id="MF_01962"/>
    </source>
</evidence>
<dbReference type="EC" id="3.5.4.2" evidence="1"/>
<dbReference type="EMBL" id="CP000304">
    <property type="protein sequence ID" value="ABP81236.1"/>
    <property type="molecule type" value="Genomic_DNA"/>
</dbReference>
<dbReference type="RefSeq" id="WP_011914630.1">
    <property type="nucleotide sequence ID" value="NC_009434.1"/>
</dbReference>
<dbReference type="SMR" id="A4VQI5"/>
<dbReference type="KEGG" id="psa:PST_3608"/>
<dbReference type="eggNOG" id="COG1816">
    <property type="taxonomic scope" value="Bacteria"/>
</dbReference>
<dbReference type="HOGENOM" id="CLU_039228_7_0_6"/>
<dbReference type="Proteomes" id="UP000000233">
    <property type="component" value="Chromosome"/>
</dbReference>
<dbReference type="GO" id="GO:0005829">
    <property type="term" value="C:cytosol"/>
    <property type="evidence" value="ECO:0007669"/>
    <property type="project" value="TreeGrafter"/>
</dbReference>
<dbReference type="GO" id="GO:0000034">
    <property type="term" value="F:adenine deaminase activity"/>
    <property type="evidence" value="ECO:0007669"/>
    <property type="project" value="UniProtKB-UniRule"/>
</dbReference>
<dbReference type="GO" id="GO:0008270">
    <property type="term" value="F:zinc ion binding"/>
    <property type="evidence" value="ECO:0007669"/>
    <property type="project" value="UniProtKB-UniRule"/>
</dbReference>
<dbReference type="GO" id="GO:0006146">
    <property type="term" value="P:adenine catabolic process"/>
    <property type="evidence" value="ECO:0007669"/>
    <property type="project" value="UniProtKB-UniRule"/>
</dbReference>
<dbReference type="GO" id="GO:0043103">
    <property type="term" value="P:hypoxanthine salvage"/>
    <property type="evidence" value="ECO:0007669"/>
    <property type="project" value="UniProtKB-UniRule"/>
</dbReference>
<dbReference type="GO" id="GO:0009117">
    <property type="term" value="P:nucleotide metabolic process"/>
    <property type="evidence" value="ECO:0007669"/>
    <property type="project" value="UniProtKB-KW"/>
</dbReference>
<dbReference type="CDD" id="cd01320">
    <property type="entry name" value="ADA"/>
    <property type="match status" value="1"/>
</dbReference>
<dbReference type="FunFam" id="3.20.20.140:FF:000039">
    <property type="entry name" value="Adenine deaminase"/>
    <property type="match status" value="1"/>
</dbReference>
<dbReference type="Gene3D" id="3.20.20.140">
    <property type="entry name" value="Metal-dependent hydrolases"/>
    <property type="match status" value="1"/>
</dbReference>
<dbReference type="HAMAP" id="MF_01962">
    <property type="entry name" value="Adenine_deaminase"/>
    <property type="match status" value="1"/>
</dbReference>
<dbReference type="InterPro" id="IPR001365">
    <property type="entry name" value="A_deaminase_dom"/>
</dbReference>
<dbReference type="InterPro" id="IPR028892">
    <property type="entry name" value="ADE"/>
</dbReference>
<dbReference type="InterPro" id="IPR006330">
    <property type="entry name" value="Ado/ade_deaminase"/>
</dbReference>
<dbReference type="InterPro" id="IPR032466">
    <property type="entry name" value="Metal_Hydrolase"/>
</dbReference>
<dbReference type="NCBIfam" id="TIGR01430">
    <property type="entry name" value="aden_deam"/>
    <property type="match status" value="1"/>
</dbReference>
<dbReference type="NCBIfam" id="NF006850">
    <property type="entry name" value="PRK09358.1-6"/>
    <property type="match status" value="1"/>
</dbReference>
<dbReference type="PANTHER" id="PTHR43114">
    <property type="entry name" value="ADENINE DEAMINASE"/>
    <property type="match status" value="1"/>
</dbReference>
<dbReference type="PANTHER" id="PTHR43114:SF6">
    <property type="entry name" value="ADENINE DEAMINASE"/>
    <property type="match status" value="1"/>
</dbReference>
<dbReference type="Pfam" id="PF00962">
    <property type="entry name" value="A_deaminase"/>
    <property type="match status" value="1"/>
</dbReference>
<dbReference type="SUPFAM" id="SSF51556">
    <property type="entry name" value="Metallo-dependent hydrolases"/>
    <property type="match status" value="1"/>
</dbReference>
<protein>
    <recommendedName>
        <fullName evidence="1">Adenine deaminase</fullName>
        <shortName evidence="1">ADE</shortName>
        <ecNumber evidence="1">3.5.4.2</ecNumber>
    </recommendedName>
    <alternativeName>
        <fullName evidence="1">Adenine aminohydrolase</fullName>
        <shortName evidence="1">AAH</shortName>
    </alternativeName>
</protein>
<proteinExistence type="inferred from homology"/>
<gene>
    <name type="ordered locus">PST_3608</name>
</gene>
<feature type="chain" id="PRO_1000017685" description="Adenine deaminase">
    <location>
        <begin position="1"/>
        <end position="316"/>
    </location>
</feature>
<feature type="active site" description="Proton donor" evidence="1">
    <location>
        <position position="197"/>
    </location>
</feature>
<feature type="binding site" evidence="1">
    <location>
        <position position="14"/>
    </location>
    <ligand>
        <name>Zn(2+)</name>
        <dbReference type="ChEBI" id="CHEBI:29105"/>
        <note>catalytic</note>
    </ligand>
</feature>
<feature type="binding site" evidence="1">
    <location>
        <position position="16"/>
    </location>
    <ligand>
        <name>Zn(2+)</name>
        <dbReference type="ChEBI" id="CHEBI:29105"/>
        <note>catalytic</note>
    </ligand>
</feature>
<feature type="binding site" evidence="1">
    <location>
        <position position="194"/>
    </location>
    <ligand>
        <name>Zn(2+)</name>
        <dbReference type="ChEBI" id="CHEBI:29105"/>
        <note>catalytic</note>
    </ligand>
</feature>
<feature type="binding site" evidence="1">
    <location>
        <position position="275"/>
    </location>
    <ligand>
        <name>Zn(2+)</name>
        <dbReference type="ChEBI" id="CHEBI:29105"/>
        <note>catalytic</note>
    </ligand>
</feature>
<feature type="binding site" evidence="1">
    <location>
        <position position="276"/>
    </location>
    <ligand>
        <name>substrate</name>
    </ligand>
</feature>
<feature type="site" description="Important for catalytic activity" evidence="1">
    <location>
        <position position="218"/>
    </location>
</feature>
<sequence>MHDWLNNLPKAELHLHLEGSLEPELMFRLAERNKIALPWNDVEALRSAYNFGNLQEFLDLYYAGADVLRTEQDFYDLTWAYLQKCEEQNVVHTEPFFDPQTHTDRGVPFEAALNGISAALADGRELLGISSGLILSFLRHLPEEEAFKTLEQALPYRNAFFAVGLDSSEVGHPPSKFQRVFDKARGEGLLTVAHAGEEGPPEYIWQALDLLKVSRIDHGVRAAEDPKLIARLIEEQIPLTVCPLSNTKLKVFADMRQHNILDLLEQGVKVTVNSDDPAYFGGYVTENFVALHESLGMTEAQARRLAQNSLDARLAY</sequence>
<comment type="function">
    <text evidence="1">Catalyzes the hydrolytic deamination of adenine to hypoxanthine. Plays an important role in the purine salvage pathway and in nitrogen catabolism.</text>
</comment>
<comment type="catalytic activity">
    <reaction evidence="1">
        <text>adenine + H2O + H(+) = hypoxanthine + NH4(+)</text>
        <dbReference type="Rhea" id="RHEA:23688"/>
        <dbReference type="ChEBI" id="CHEBI:15377"/>
        <dbReference type="ChEBI" id="CHEBI:15378"/>
        <dbReference type="ChEBI" id="CHEBI:16708"/>
        <dbReference type="ChEBI" id="CHEBI:17368"/>
        <dbReference type="ChEBI" id="CHEBI:28938"/>
        <dbReference type="EC" id="3.5.4.2"/>
    </reaction>
</comment>
<comment type="cofactor">
    <cofactor evidence="1">
        <name>Zn(2+)</name>
        <dbReference type="ChEBI" id="CHEBI:29105"/>
    </cofactor>
    <text evidence="1">Binds 1 zinc ion per subunit.</text>
</comment>
<comment type="similarity">
    <text evidence="1">Belongs to the metallo-dependent hydrolases superfamily. Adenosine and AMP deaminases family. Adenine deaminase type 2 subfamily.</text>
</comment>
<keyword id="KW-0378">Hydrolase</keyword>
<keyword id="KW-0479">Metal-binding</keyword>
<keyword id="KW-0546">Nucleotide metabolism</keyword>
<keyword id="KW-1185">Reference proteome</keyword>
<keyword id="KW-0862">Zinc</keyword>